<name>RL35_TETTS</name>
<reference key="1">
    <citation type="journal article" date="2006" name="PLoS Biol.">
        <title>Macronuclear genome sequence of the ciliate Tetrahymena thermophila, a model eukaryote.</title>
        <authorList>
            <person name="Eisen J.A."/>
            <person name="Coyne R.S."/>
            <person name="Wu M."/>
            <person name="Wu D."/>
            <person name="Thiagarajan M."/>
            <person name="Wortman J.R."/>
            <person name="Badger J.H."/>
            <person name="Ren Q."/>
            <person name="Amedeo P."/>
            <person name="Jones K.M."/>
            <person name="Tallon L.J."/>
            <person name="Delcher A.L."/>
            <person name="Salzberg S.L."/>
            <person name="Silva J.C."/>
            <person name="Haas B.J."/>
            <person name="Majoros W.H."/>
            <person name="Farzad M."/>
            <person name="Carlton J.M."/>
            <person name="Smith R.K. Jr."/>
            <person name="Garg J."/>
            <person name="Pearlman R.E."/>
            <person name="Karrer K.M."/>
            <person name="Sun L."/>
            <person name="Manning G."/>
            <person name="Elde N.C."/>
            <person name="Turkewitz A.P."/>
            <person name="Asai D.J."/>
            <person name="Wilkes D.E."/>
            <person name="Wang Y."/>
            <person name="Cai H."/>
            <person name="Collins K."/>
            <person name="Stewart B.A."/>
            <person name="Lee S.R."/>
            <person name="Wilamowska K."/>
            <person name="Weinberg Z."/>
            <person name="Ruzzo W.L."/>
            <person name="Wloga D."/>
            <person name="Gaertig J."/>
            <person name="Frankel J."/>
            <person name="Tsao C.-C."/>
            <person name="Gorovsky M.A."/>
            <person name="Keeling P.J."/>
            <person name="Waller R.F."/>
            <person name="Patron N.J."/>
            <person name="Cherry J.M."/>
            <person name="Stover N.A."/>
            <person name="Krieger C.J."/>
            <person name="del Toro C."/>
            <person name="Ryder H.F."/>
            <person name="Williamson S.C."/>
            <person name="Barbeau R.A."/>
            <person name="Hamilton E.P."/>
            <person name="Orias E."/>
        </authorList>
    </citation>
    <scope>NUCLEOTIDE SEQUENCE [LARGE SCALE GENOMIC DNA]</scope>
    <source>
        <strain>SB210</strain>
    </source>
</reference>
<reference key="2">
    <citation type="journal article" date="2011" name="Science">
        <title>Crystal structure of the eukaryotic 60S ribosomal subunit in complex with initiation factor 6.</title>
        <authorList>
            <person name="Klinge S."/>
            <person name="Voigts-Hoffmann F."/>
            <person name="Leibundgut M."/>
            <person name="Arpagaus S."/>
            <person name="Ban N."/>
        </authorList>
    </citation>
    <scope>X-RAY CRYSTALLOGRAPHY (3.52 ANGSTROMS) OF 60S RIBOSOME</scope>
</reference>
<accession>P0DJ51</accession>
<organism>
    <name type="scientific">Tetrahymena thermophila (strain SB210)</name>
    <dbReference type="NCBI Taxonomy" id="312017"/>
    <lineage>
        <taxon>Eukaryota</taxon>
        <taxon>Sar</taxon>
        <taxon>Alveolata</taxon>
        <taxon>Ciliophora</taxon>
        <taxon>Intramacronucleata</taxon>
        <taxon>Oligohymenophorea</taxon>
        <taxon>Hymenostomatida</taxon>
        <taxon>Tetrahymenina</taxon>
        <taxon>Tetrahymenidae</taxon>
        <taxon>Tetrahymena</taxon>
    </lineage>
</organism>
<sequence>MDKSVRVFKLRTQTEEQLVGELGKLQTELSQLRIAKIAGGTANKLGRIGIVRKAIAKYLTIINEKRRQAVKDQFKGKSLKPLDIRVKKTRAIRRKLTKKQREAVLVKTQKKLNNFGLRKFALKA</sequence>
<dbReference type="EMBL" id="GG662808">
    <property type="protein sequence ID" value="EAR89976.2"/>
    <property type="molecule type" value="Genomic_DNA"/>
</dbReference>
<dbReference type="RefSeq" id="XP_001010221.2">
    <property type="nucleotide sequence ID" value="XM_001010221.3"/>
</dbReference>
<dbReference type="PDB" id="4V8P">
    <property type="method" value="X-ray"/>
    <property type="resolution" value="3.52 A"/>
    <property type="chains" value="BU/CU/EU/GU=1-124"/>
</dbReference>
<dbReference type="PDBsum" id="4V8P"/>
<dbReference type="SMR" id="P0DJ51"/>
<dbReference type="FunCoup" id="P0DJ51">
    <property type="interactions" value="460"/>
</dbReference>
<dbReference type="IntAct" id="P0DJ51">
    <property type="interactions" value="1"/>
</dbReference>
<dbReference type="STRING" id="312017.P0DJ51"/>
<dbReference type="EnsemblProtists" id="EAR89976">
    <property type="protein sequence ID" value="EAR89976"/>
    <property type="gene ID" value="TTHERM_00561680"/>
</dbReference>
<dbReference type="KEGG" id="tet:TTHERM_00561680"/>
<dbReference type="eggNOG" id="KOG3436">
    <property type="taxonomic scope" value="Eukaryota"/>
</dbReference>
<dbReference type="HOGENOM" id="CLU_110381_1_0_1"/>
<dbReference type="InParanoid" id="P0DJ51"/>
<dbReference type="OMA" id="VMNQKAR"/>
<dbReference type="OrthoDB" id="295891at2759"/>
<dbReference type="Proteomes" id="UP000009168">
    <property type="component" value="Unassembled WGS sequence"/>
</dbReference>
<dbReference type="GO" id="GO:0022625">
    <property type="term" value="C:cytosolic large ribosomal subunit"/>
    <property type="evidence" value="ECO:0007669"/>
    <property type="project" value="InterPro"/>
</dbReference>
<dbReference type="GO" id="GO:0003729">
    <property type="term" value="F:mRNA binding"/>
    <property type="evidence" value="ECO:0007669"/>
    <property type="project" value="TreeGrafter"/>
</dbReference>
<dbReference type="GO" id="GO:0003735">
    <property type="term" value="F:structural constituent of ribosome"/>
    <property type="evidence" value="ECO:0007669"/>
    <property type="project" value="InterPro"/>
</dbReference>
<dbReference type="GO" id="GO:0000463">
    <property type="term" value="P:maturation of LSU-rRNA from tricistronic rRNA transcript (SSU-rRNA, 5.8S rRNA, LSU-rRNA)"/>
    <property type="evidence" value="ECO:0007669"/>
    <property type="project" value="InterPro"/>
</dbReference>
<dbReference type="GO" id="GO:0006412">
    <property type="term" value="P:translation"/>
    <property type="evidence" value="ECO:0007669"/>
    <property type="project" value="InterPro"/>
</dbReference>
<dbReference type="FunFam" id="6.10.250.3450:FF:000001">
    <property type="entry name" value="60S ribosomal protein L35"/>
    <property type="match status" value="1"/>
</dbReference>
<dbReference type="FunFam" id="1.10.287.310:FF:000008">
    <property type="entry name" value="Uncharacterized protein"/>
    <property type="match status" value="1"/>
</dbReference>
<dbReference type="Gene3D" id="1.10.287.310">
    <property type="match status" value="1"/>
</dbReference>
<dbReference type="Gene3D" id="6.10.250.3450">
    <property type="match status" value="1"/>
</dbReference>
<dbReference type="HAMAP" id="MF_00374">
    <property type="entry name" value="Ribosomal_uL29"/>
    <property type="match status" value="1"/>
</dbReference>
<dbReference type="InterPro" id="IPR001854">
    <property type="entry name" value="Ribosomal_uL29"/>
</dbReference>
<dbReference type="InterPro" id="IPR045059">
    <property type="entry name" value="Ribosomal_uL29_euk"/>
</dbReference>
<dbReference type="InterPro" id="IPR036049">
    <property type="entry name" value="Ribosomal_uL29_sf"/>
</dbReference>
<dbReference type="NCBIfam" id="TIGR00012">
    <property type="entry name" value="L29"/>
    <property type="match status" value="1"/>
</dbReference>
<dbReference type="PANTHER" id="PTHR45722">
    <property type="entry name" value="60S RIBOSOMAL PROTEIN L35"/>
    <property type="match status" value="1"/>
</dbReference>
<dbReference type="PANTHER" id="PTHR45722:SF2">
    <property type="entry name" value="LARGE RIBOSOMAL SUBUNIT PROTEIN UL29-RELATED"/>
    <property type="match status" value="1"/>
</dbReference>
<dbReference type="Pfam" id="PF00831">
    <property type="entry name" value="Ribosomal_L29"/>
    <property type="match status" value="1"/>
</dbReference>
<dbReference type="SUPFAM" id="SSF46561">
    <property type="entry name" value="Ribosomal protein L29 (L29p)"/>
    <property type="match status" value="1"/>
</dbReference>
<evidence type="ECO:0000305" key="1"/>
<protein>
    <recommendedName>
        <fullName evidence="1">Large ribosomal subunit protein uL29</fullName>
    </recommendedName>
    <alternativeName>
        <fullName>60S ribosomal protein L35</fullName>
    </alternativeName>
</protein>
<comment type="similarity">
    <text evidence="1">Belongs to the universal ribosomal protein uL29 family.</text>
</comment>
<keyword id="KW-0002">3D-structure</keyword>
<keyword id="KW-1185">Reference proteome</keyword>
<keyword id="KW-0687">Ribonucleoprotein</keyword>
<keyword id="KW-0689">Ribosomal protein</keyword>
<gene>
    <name type="primary">RPL35</name>
    <name type="ORF">TTHERM_00561680A</name>
</gene>
<feature type="chain" id="PRO_0000413519" description="Large ribosomal subunit protein uL29">
    <location>
        <begin position="1"/>
        <end position="124"/>
    </location>
</feature>
<proteinExistence type="evidence at protein level"/>